<sequence length="382" mass="42277">MSLIIFTSAQRLRSVCRLQRIHGHMMSSKAGSEVLFEKVGKAGVITLNRPKALNALTLNMIRHIYPQLKKWDKDSETDIVIIKGAGEKAFCAGGDIRAIAEAGKAGNLLSQVFFREEYILNNTIGTYQKPYVALINGITMGGGVGLSVHGQFRVATEKTLFAMPETGIGLFPDVGGGYFLPRLQGKLGLFLALTGFRLKGRDVQRVGVATHFVQSEKIESLEKDLVDLKSPSISDVAQLLDSYQEQSHLDAEKPFVLQEQTEAIDRLFSAGSVEEIVENLKKDGSAFALKQAETLAKMSPTSLKLTFRQIEEGARMSLQEVFMMEYRLSQACMNGHDFYEGVRAVLIDKDQSPKWKPSTLAGVSEQFVDKCFSSLDERDLKL</sequence>
<organism>
    <name type="scientific">Danio rerio</name>
    <name type="common">Zebrafish</name>
    <name type="synonym">Brachydanio rerio</name>
    <dbReference type="NCBI Taxonomy" id="7955"/>
    <lineage>
        <taxon>Eukaryota</taxon>
        <taxon>Metazoa</taxon>
        <taxon>Chordata</taxon>
        <taxon>Craniata</taxon>
        <taxon>Vertebrata</taxon>
        <taxon>Euteleostomi</taxon>
        <taxon>Actinopterygii</taxon>
        <taxon>Neopterygii</taxon>
        <taxon>Teleostei</taxon>
        <taxon>Ostariophysi</taxon>
        <taxon>Cypriniformes</taxon>
        <taxon>Danionidae</taxon>
        <taxon>Danioninae</taxon>
        <taxon>Danio</taxon>
    </lineage>
</organism>
<proteinExistence type="evidence at transcript level"/>
<name>HIBCH_DANRE</name>
<keyword id="KW-0101">Branched-chain amino acid catabolism</keyword>
<keyword id="KW-0378">Hydrolase</keyword>
<keyword id="KW-0496">Mitochondrion</keyword>
<keyword id="KW-1185">Reference proteome</keyword>
<keyword id="KW-0809">Transit peptide</keyword>
<dbReference type="EC" id="3.1.2.4"/>
<dbReference type="EMBL" id="BC091995">
    <property type="protein sequence ID" value="AAH91995.1"/>
    <property type="molecule type" value="mRNA"/>
</dbReference>
<dbReference type="RefSeq" id="NP_001014338.1">
    <property type="nucleotide sequence ID" value="NM_001014316.1"/>
</dbReference>
<dbReference type="SMR" id="Q58EB4"/>
<dbReference type="FunCoup" id="Q58EB4">
    <property type="interactions" value="2656"/>
</dbReference>
<dbReference type="STRING" id="7955.ENSDARP00000118435"/>
<dbReference type="PaxDb" id="7955-ENSDARP00000118435"/>
<dbReference type="PeptideAtlas" id="Q58EB4"/>
<dbReference type="GeneID" id="798364"/>
<dbReference type="KEGG" id="dre:798364"/>
<dbReference type="AGR" id="ZFIN:ZDB-GENE-050327-29"/>
<dbReference type="CTD" id="26275"/>
<dbReference type="ZFIN" id="ZDB-GENE-050327-29">
    <property type="gene designation" value="hibch"/>
</dbReference>
<dbReference type="eggNOG" id="KOG1684">
    <property type="taxonomic scope" value="Eukaryota"/>
</dbReference>
<dbReference type="InParanoid" id="Q58EB4"/>
<dbReference type="OrthoDB" id="1737613at2759"/>
<dbReference type="Reactome" id="R-DRE-70895">
    <property type="pathway name" value="Branched-chain amino acid catabolism"/>
</dbReference>
<dbReference type="UniPathway" id="UPA00362"/>
<dbReference type="ChiTaRS" id="hibch">
    <property type="organism name" value="zebrafish"/>
</dbReference>
<dbReference type="PRO" id="PR:Q58EB4"/>
<dbReference type="Proteomes" id="UP000000437">
    <property type="component" value="Chromosome 9"/>
</dbReference>
<dbReference type="GO" id="GO:0005739">
    <property type="term" value="C:mitochondrion"/>
    <property type="evidence" value="ECO:0000318"/>
    <property type="project" value="GO_Central"/>
</dbReference>
<dbReference type="GO" id="GO:0003860">
    <property type="term" value="F:3-hydroxyisobutyryl-CoA hydrolase activity"/>
    <property type="evidence" value="ECO:0000318"/>
    <property type="project" value="GO_Central"/>
</dbReference>
<dbReference type="GO" id="GO:0006574">
    <property type="term" value="P:valine catabolic process"/>
    <property type="evidence" value="ECO:0000318"/>
    <property type="project" value="GO_Central"/>
</dbReference>
<dbReference type="CDD" id="cd06558">
    <property type="entry name" value="crotonase-like"/>
    <property type="match status" value="1"/>
</dbReference>
<dbReference type="FunFam" id="3.90.226.10:FF:000026">
    <property type="entry name" value="3-hydroxyisobutyryl-CoA hydrolase, mitochondrial"/>
    <property type="match status" value="1"/>
</dbReference>
<dbReference type="Gene3D" id="3.90.226.10">
    <property type="entry name" value="2-enoyl-CoA Hydratase, Chain A, domain 1"/>
    <property type="match status" value="1"/>
</dbReference>
<dbReference type="InterPro" id="IPR029045">
    <property type="entry name" value="ClpP/crotonase-like_dom_sf"/>
</dbReference>
<dbReference type="InterPro" id="IPR045004">
    <property type="entry name" value="ECH_dom"/>
</dbReference>
<dbReference type="InterPro" id="IPR032259">
    <property type="entry name" value="HIBYL-CoA-H"/>
</dbReference>
<dbReference type="NCBIfam" id="NF004127">
    <property type="entry name" value="PRK05617.1"/>
    <property type="match status" value="1"/>
</dbReference>
<dbReference type="PANTHER" id="PTHR43176:SF3">
    <property type="entry name" value="3-HYDROXYISOBUTYRYL-COA HYDROLASE, MITOCHONDRIAL"/>
    <property type="match status" value="1"/>
</dbReference>
<dbReference type="PANTHER" id="PTHR43176">
    <property type="entry name" value="3-HYDROXYISOBUTYRYL-COA HYDROLASE-RELATED"/>
    <property type="match status" value="1"/>
</dbReference>
<dbReference type="Pfam" id="PF16113">
    <property type="entry name" value="ECH_2"/>
    <property type="match status" value="1"/>
</dbReference>
<dbReference type="SUPFAM" id="SSF52096">
    <property type="entry name" value="ClpP/crotonase"/>
    <property type="match status" value="1"/>
</dbReference>
<accession>Q58EB4</accession>
<evidence type="ECO:0000250" key="1"/>
<evidence type="ECO:0000255" key="2"/>
<evidence type="ECO:0000305" key="3"/>
<reference key="1">
    <citation type="submission" date="2005-03" db="EMBL/GenBank/DDBJ databases">
        <authorList>
            <consortium name="NIH - Zebrafish Gene Collection (ZGC) project"/>
        </authorList>
    </citation>
    <scope>NUCLEOTIDE SEQUENCE [LARGE SCALE MRNA]</scope>
    <source>
        <tissue>Embryo</tissue>
    </source>
</reference>
<gene>
    <name type="primary">hibch</name>
    <name type="ORF">zgc:110824</name>
</gene>
<protein>
    <recommendedName>
        <fullName>3-hydroxyisobutyryl-CoA hydrolase, mitochondrial</fullName>
        <ecNumber>3.1.2.4</ecNumber>
    </recommendedName>
    <alternativeName>
        <fullName>3-hydroxyisobutyryl-coenzyme A hydrolase</fullName>
        <shortName>HIB-CoA hydrolase</shortName>
        <shortName>HIBYL-CoA-H</shortName>
    </alternativeName>
</protein>
<comment type="function">
    <text evidence="1">Hydrolyzes 3-hydroxyisobutyryl-CoA (HIBYL-CoA), a saline catabolite. Has high activity toward isobutyryl-CoA. Could be an isobutyryl-CoA dehydrogenase that functions in valine catabolism. Also hydrolyzes 3-hydroxypropanoyl-CoA (By similarity).</text>
</comment>
<comment type="catalytic activity">
    <reaction>
        <text>3-hydroxy-2-methylpropanoyl-CoA + H2O = 3-hydroxy-2-methylpropanoate + CoA + H(+)</text>
        <dbReference type="Rhea" id="RHEA:20888"/>
        <dbReference type="ChEBI" id="CHEBI:11805"/>
        <dbReference type="ChEBI" id="CHEBI:15377"/>
        <dbReference type="ChEBI" id="CHEBI:15378"/>
        <dbReference type="ChEBI" id="CHEBI:57287"/>
        <dbReference type="ChEBI" id="CHEBI:57340"/>
        <dbReference type="EC" id="3.1.2.4"/>
    </reaction>
</comment>
<comment type="pathway">
    <text>Amino-acid degradation; L-valine degradation.</text>
</comment>
<comment type="subcellular location">
    <subcellularLocation>
        <location evidence="1">Mitochondrion</location>
    </subcellularLocation>
</comment>
<comment type="similarity">
    <text evidence="3">Belongs to the enoyl-CoA hydratase/isomerase family.</text>
</comment>
<feature type="transit peptide" description="Mitochondrion" evidence="2">
    <location>
        <begin position="1"/>
        <end status="unknown"/>
    </location>
</feature>
<feature type="chain" id="PRO_0000284933" description="3-hydroxyisobutyryl-CoA hydrolase, mitochondrial">
    <location>
        <begin status="unknown"/>
        <end position="382"/>
    </location>
</feature>
<feature type="binding site" evidence="1">
    <location>
        <position position="117"/>
    </location>
    <ligand>
        <name>substrate</name>
    </ligand>
</feature>
<feature type="binding site" evidence="1">
    <location>
        <position position="142"/>
    </location>
    <ligand>
        <name>substrate</name>
    </ligand>
</feature>
<feature type="binding site" evidence="1">
    <location>
        <position position="165"/>
    </location>
    <ligand>
        <name>substrate</name>
    </ligand>
</feature>
<feature type="binding site" evidence="1">
    <location>
        <position position="173"/>
    </location>
    <ligand>
        <name>substrate</name>
    </ligand>
</feature>